<name>CYF_CHLAT</name>
<gene>
    <name evidence="2" type="primary">petA</name>
</gene>
<comment type="function">
    <text evidence="2">Component of the cytochrome b6-f complex, which mediates electron transfer between photosystem II (PSII) and photosystem I (PSI), cyclic electron flow around PSI, and state transitions.</text>
</comment>
<comment type="cofactor">
    <cofactor evidence="2">
        <name>heme</name>
        <dbReference type="ChEBI" id="CHEBI:30413"/>
    </cofactor>
    <text evidence="2">Binds 1 heme group covalently.</text>
</comment>
<comment type="subunit">
    <text evidence="1">The 4 large subunits of the cytochrome b6-f complex are cytochrome b6, subunit IV (17 kDa polypeptide, petD), cytochrome f and the Rieske protein, while the 4 small subunits are PetG, PetL, PetM and PetN. The complex functions as a dimer (By similarity).</text>
</comment>
<comment type="subcellular location">
    <subcellularLocation>
        <location evidence="2">Plastid</location>
        <location evidence="2">Chloroplast thylakoid membrane</location>
        <topology evidence="2">Single-pass membrane protein</topology>
    </subcellularLocation>
</comment>
<comment type="similarity">
    <text evidence="2">Belongs to the cytochrome f family.</text>
</comment>
<reference key="1">
    <citation type="journal article" date="2007" name="BMC Biol.">
        <title>A clade uniting the green algae Mesostigma viride and Chlorokybus atmophyticus represents the deepest branch of the Streptophyta in chloroplast genome-based phylogenies.</title>
        <authorList>
            <person name="Lemieux C."/>
            <person name="Otis C."/>
            <person name="Turmel M."/>
        </authorList>
    </citation>
    <scope>NUCLEOTIDE SEQUENCE [LARGE SCALE GENOMIC DNA]</scope>
    <source>
        <strain>SAG 48.80</strain>
    </source>
</reference>
<dbReference type="EMBL" id="DQ422812">
    <property type="protein sequence ID" value="ABD62201.2"/>
    <property type="molecule type" value="Genomic_DNA"/>
</dbReference>
<dbReference type="RefSeq" id="YP_001019144.1">
    <property type="nucleotide sequence ID" value="NC_008822.1"/>
</dbReference>
<dbReference type="SMR" id="Q19V68"/>
<dbReference type="GeneID" id="4783327"/>
<dbReference type="GO" id="GO:0009535">
    <property type="term" value="C:chloroplast thylakoid membrane"/>
    <property type="evidence" value="ECO:0007669"/>
    <property type="project" value="UniProtKB-SubCell"/>
</dbReference>
<dbReference type="GO" id="GO:0009055">
    <property type="term" value="F:electron transfer activity"/>
    <property type="evidence" value="ECO:0007669"/>
    <property type="project" value="UniProtKB-UniRule"/>
</dbReference>
<dbReference type="GO" id="GO:0020037">
    <property type="term" value="F:heme binding"/>
    <property type="evidence" value="ECO:0007669"/>
    <property type="project" value="InterPro"/>
</dbReference>
<dbReference type="GO" id="GO:0005506">
    <property type="term" value="F:iron ion binding"/>
    <property type="evidence" value="ECO:0007669"/>
    <property type="project" value="InterPro"/>
</dbReference>
<dbReference type="GO" id="GO:0015979">
    <property type="term" value="P:photosynthesis"/>
    <property type="evidence" value="ECO:0007669"/>
    <property type="project" value="UniProtKB-UniRule"/>
</dbReference>
<dbReference type="FunFam" id="1.20.5.700:FF:000001">
    <property type="entry name" value="Cytochrome f"/>
    <property type="match status" value="1"/>
</dbReference>
<dbReference type="FunFam" id="2.60.40.830:FF:000001">
    <property type="entry name" value="Cytochrome f"/>
    <property type="match status" value="1"/>
</dbReference>
<dbReference type="Gene3D" id="2.40.50.100">
    <property type="match status" value="1"/>
</dbReference>
<dbReference type="Gene3D" id="2.60.40.830">
    <property type="entry name" value="Cytochrome f large domain"/>
    <property type="match status" value="1"/>
</dbReference>
<dbReference type="Gene3D" id="1.20.5.700">
    <property type="entry name" value="Single helix bin"/>
    <property type="match status" value="1"/>
</dbReference>
<dbReference type="HAMAP" id="MF_00610">
    <property type="entry name" value="Cytb6_f_cytF"/>
    <property type="match status" value="1"/>
</dbReference>
<dbReference type="InterPro" id="IPR024058">
    <property type="entry name" value="Cyt-f_TM"/>
</dbReference>
<dbReference type="InterPro" id="IPR002325">
    <property type="entry name" value="Cyt_f"/>
</dbReference>
<dbReference type="InterPro" id="IPR024094">
    <property type="entry name" value="Cyt_f_lg_dom"/>
</dbReference>
<dbReference type="InterPro" id="IPR036826">
    <property type="entry name" value="Cyt_f_lg_dom_sf"/>
</dbReference>
<dbReference type="InterPro" id="IPR011054">
    <property type="entry name" value="Rudment_hybrid_motif"/>
</dbReference>
<dbReference type="PANTHER" id="PTHR33288">
    <property type="match status" value="1"/>
</dbReference>
<dbReference type="PANTHER" id="PTHR33288:SF10">
    <property type="entry name" value="CYTOCHROME F"/>
    <property type="match status" value="1"/>
</dbReference>
<dbReference type="Pfam" id="PF01333">
    <property type="entry name" value="Apocytochr_F_C"/>
    <property type="match status" value="1"/>
</dbReference>
<dbReference type="Pfam" id="PF16639">
    <property type="entry name" value="Apocytochr_F_N"/>
    <property type="match status" value="1"/>
</dbReference>
<dbReference type="PRINTS" id="PR00610">
    <property type="entry name" value="CYTOCHROMEF"/>
</dbReference>
<dbReference type="SUPFAM" id="SSF103431">
    <property type="entry name" value="Cytochrome f subunit of the cytochrome b6f complex, transmembrane anchor"/>
    <property type="match status" value="1"/>
</dbReference>
<dbReference type="SUPFAM" id="SSF49441">
    <property type="entry name" value="Cytochrome f, large domain"/>
    <property type="match status" value="1"/>
</dbReference>
<dbReference type="SUPFAM" id="SSF51246">
    <property type="entry name" value="Rudiment single hybrid motif"/>
    <property type="match status" value="1"/>
</dbReference>
<dbReference type="PROSITE" id="PS51010">
    <property type="entry name" value="CYTF"/>
    <property type="match status" value="1"/>
</dbReference>
<protein>
    <recommendedName>
        <fullName evidence="2">Cytochrome f</fullName>
    </recommendedName>
</protein>
<organism>
    <name type="scientific">Chlorokybus atmophyticus</name>
    <name type="common">Soil alga</name>
    <dbReference type="NCBI Taxonomy" id="3144"/>
    <lineage>
        <taxon>Eukaryota</taxon>
        <taxon>Viridiplantae</taxon>
        <taxon>Streptophyta</taxon>
        <taxon>Chlorokybophyceae</taxon>
        <taxon>Chlorokybales</taxon>
        <taxon>Chlorokybaceae</taxon>
        <taxon>Chlorokybus</taxon>
    </lineage>
</organism>
<proteinExistence type="inferred from homology"/>
<keyword id="KW-0150">Chloroplast</keyword>
<keyword id="KW-0249">Electron transport</keyword>
<keyword id="KW-0349">Heme</keyword>
<keyword id="KW-0408">Iron</keyword>
<keyword id="KW-0472">Membrane</keyword>
<keyword id="KW-0479">Metal-binding</keyword>
<keyword id="KW-0602">Photosynthesis</keyword>
<keyword id="KW-0934">Plastid</keyword>
<keyword id="KW-0732">Signal</keyword>
<keyword id="KW-0793">Thylakoid</keyword>
<keyword id="KW-0812">Transmembrane</keyword>
<keyword id="KW-1133">Transmembrane helix</keyword>
<keyword id="KW-0813">Transport</keyword>
<accession>Q19V68</accession>
<sequence>MFQQMQKISLKLLKTTFLFLFATFILVGLPSTSQAYPIFAQQAYENPREATGRIVCANCHLAKKSVDIEVPQAVLPNTVFEAVVKIPYDIQLKQVLANGKKGGLNVGAVLILPEGFQIAPADRIPEEMKSKIGNLYYQPYSAEKKNIVVVGPIPGKTYQEIVFPILSPDPAKDKGTHFFKYPIYVGGNRGRGQIYPDGSKSNNNVYNASTTGKIIQITAKPKGGYILNIETPDGATIEEKIPAGPELIVSEGQSVKADQPLTKNPNVGGFGQTEGEIVLQNPARIQGLIAFFISVIIAQTFLVLKKKQFERVQLAEMNF</sequence>
<geneLocation type="chloroplast"/>
<feature type="signal peptide" evidence="2">
    <location>
        <begin position="1"/>
        <end position="35"/>
    </location>
</feature>
<feature type="chain" id="PRO_0000342054" description="Cytochrome f">
    <location>
        <begin position="36"/>
        <end position="319"/>
    </location>
</feature>
<feature type="transmembrane region" description="Helical" evidence="2">
    <location>
        <begin position="285"/>
        <end position="305"/>
    </location>
</feature>
<feature type="binding site" description="axial binding residue" evidence="2">
    <location>
        <position position="36"/>
    </location>
    <ligand>
        <name>heme</name>
        <dbReference type="ChEBI" id="CHEBI:30413"/>
    </ligand>
    <ligandPart>
        <name>Fe</name>
        <dbReference type="ChEBI" id="CHEBI:18248"/>
    </ligandPart>
</feature>
<feature type="binding site" description="covalent" evidence="2">
    <location>
        <position position="56"/>
    </location>
    <ligand>
        <name>heme</name>
        <dbReference type="ChEBI" id="CHEBI:30413"/>
    </ligand>
</feature>
<feature type="binding site" description="covalent" evidence="2">
    <location>
        <position position="59"/>
    </location>
    <ligand>
        <name>heme</name>
        <dbReference type="ChEBI" id="CHEBI:30413"/>
    </ligand>
</feature>
<feature type="binding site" description="axial binding residue" evidence="2">
    <location>
        <position position="60"/>
    </location>
    <ligand>
        <name>heme</name>
        <dbReference type="ChEBI" id="CHEBI:30413"/>
    </ligand>
    <ligandPart>
        <name>Fe</name>
        <dbReference type="ChEBI" id="CHEBI:18248"/>
    </ligandPart>
</feature>
<evidence type="ECO:0000250" key="1"/>
<evidence type="ECO:0000255" key="2">
    <source>
        <dbReference type="HAMAP-Rule" id="MF_00610"/>
    </source>
</evidence>